<dbReference type="EC" id="3.4.24.55"/>
<dbReference type="EMBL" id="AL513382">
    <property type="protein sequence ID" value="CAD02819.1"/>
    <property type="molecule type" value="Genomic_DNA"/>
</dbReference>
<dbReference type="EMBL" id="AE014613">
    <property type="protein sequence ID" value="AAO70457.1"/>
    <property type="molecule type" value="Genomic_DNA"/>
</dbReference>
<dbReference type="RefSeq" id="NP_457388.1">
    <property type="nucleotide sequence ID" value="NC_003198.1"/>
</dbReference>
<dbReference type="RefSeq" id="WP_001138262.1">
    <property type="nucleotide sequence ID" value="NZ_WSUR01000005.1"/>
</dbReference>
<dbReference type="SMR" id="Q8Z418"/>
<dbReference type="STRING" id="220341.gene:17587019"/>
<dbReference type="MEROPS" id="M16.001"/>
<dbReference type="KEGG" id="stt:t2903"/>
<dbReference type="KEGG" id="sty:STY3133"/>
<dbReference type="PATRIC" id="fig|220341.7.peg.3188"/>
<dbReference type="eggNOG" id="COG1025">
    <property type="taxonomic scope" value="Bacteria"/>
</dbReference>
<dbReference type="HOGENOM" id="CLU_004639_1_3_6"/>
<dbReference type="OMA" id="WIFDEMK"/>
<dbReference type="OrthoDB" id="9811314at2"/>
<dbReference type="Proteomes" id="UP000000541">
    <property type="component" value="Chromosome"/>
</dbReference>
<dbReference type="Proteomes" id="UP000002670">
    <property type="component" value="Chromosome"/>
</dbReference>
<dbReference type="GO" id="GO:0042597">
    <property type="term" value="C:periplasmic space"/>
    <property type="evidence" value="ECO:0007669"/>
    <property type="project" value="UniProtKB-SubCell"/>
</dbReference>
<dbReference type="GO" id="GO:0046872">
    <property type="term" value="F:metal ion binding"/>
    <property type="evidence" value="ECO:0007669"/>
    <property type="project" value="UniProtKB-KW"/>
</dbReference>
<dbReference type="GO" id="GO:0004222">
    <property type="term" value="F:metalloendopeptidase activity"/>
    <property type="evidence" value="ECO:0007669"/>
    <property type="project" value="UniProtKB-EC"/>
</dbReference>
<dbReference type="GO" id="GO:0006508">
    <property type="term" value="P:proteolysis"/>
    <property type="evidence" value="ECO:0007669"/>
    <property type="project" value="UniProtKB-KW"/>
</dbReference>
<dbReference type="FunFam" id="3.30.830.10:FF:000012">
    <property type="entry name" value="Protease 3"/>
    <property type="match status" value="1"/>
</dbReference>
<dbReference type="Gene3D" id="3.30.830.10">
    <property type="entry name" value="Metalloenzyme, LuxS/M16 peptidase-like"/>
    <property type="match status" value="4"/>
</dbReference>
<dbReference type="InterPro" id="IPR011249">
    <property type="entry name" value="Metalloenz_LuxS/M16"/>
</dbReference>
<dbReference type="InterPro" id="IPR011765">
    <property type="entry name" value="Pept_M16_N"/>
</dbReference>
<dbReference type="InterPro" id="IPR050626">
    <property type="entry name" value="Peptidase_M16"/>
</dbReference>
<dbReference type="InterPro" id="IPR007863">
    <property type="entry name" value="Peptidase_M16_C"/>
</dbReference>
<dbReference type="InterPro" id="IPR032632">
    <property type="entry name" value="Peptidase_M16_M"/>
</dbReference>
<dbReference type="InterPro" id="IPR054734">
    <property type="entry name" value="PqqF-like_C_4"/>
</dbReference>
<dbReference type="NCBIfam" id="NF011681">
    <property type="entry name" value="PRK15101.1"/>
    <property type="match status" value="1"/>
</dbReference>
<dbReference type="PANTHER" id="PTHR43690:SF18">
    <property type="entry name" value="INSULIN-DEGRADING ENZYME-RELATED"/>
    <property type="match status" value="1"/>
</dbReference>
<dbReference type="PANTHER" id="PTHR43690">
    <property type="entry name" value="NARDILYSIN"/>
    <property type="match status" value="1"/>
</dbReference>
<dbReference type="Pfam" id="PF00675">
    <property type="entry name" value="Peptidase_M16"/>
    <property type="match status" value="1"/>
</dbReference>
<dbReference type="Pfam" id="PF05193">
    <property type="entry name" value="Peptidase_M16_C"/>
    <property type="match status" value="1"/>
</dbReference>
<dbReference type="Pfam" id="PF16187">
    <property type="entry name" value="Peptidase_M16_M"/>
    <property type="match status" value="1"/>
</dbReference>
<dbReference type="Pfam" id="PF22456">
    <property type="entry name" value="PqqF-like_C_4"/>
    <property type="match status" value="1"/>
</dbReference>
<dbReference type="SUPFAM" id="SSF63411">
    <property type="entry name" value="LuxS/MPP-like metallohydrolase"/>
    <property type="match status" value="4"/>
</dbReference>
<evidence type="ECO:0000250" key="1"/>
<evidence type="ECO:0000305" key="2"/>
<accession>Q8Z418</accession>
<feature type="signal peptide" evidence="1">
    <location>
        <begin position="1"/>
        <end position="23"/>
    </location>
</feature>
<feature type="chain" id="PRO_0000026761" description="Protease 3">
    <location>
        <begin position="24"/>
        <end position="962"/>
    </location>
</feature>
<feature type="active site" description="Proton acceptor" evidence="1">
    <location>
        <position position="91"/>
    </location>
</feature>
<feature type="binding site" evidence="1">
    <location>
        <position position="88"/>
    </location>
    <ligand>
        <name>Zn(2+)</name>
        <dbReference type="ChEBI" id="CHEBI:29105"/>
    </ligand>
</feature>
<feature type="binding site" evidence="1">
    <location>
        <position position="92"/>
    </location>
    <ligand>
        <name>Zn(2+)</name>
        <dbReference type="ChEBI" id="CHEBI:29105"/>
    </ligand>
</feature>
<feature type="binding site" evidence="1">
    <location>
        <position position="169"/>
    </location>
    <ligand>
        <name>Zn(2+)</name>
        <dbReference type="ChEBI" id="CHEBI:29105"/>
    </ligand>
</feature>
<reference key="1">
    <citation type="journal article" date="2001" name="Nature">
        <title>Complete genome sequence of a multiple drug resistant Salmonella enterica serovar Typhi CT18.</title>
        <authorList>
            <person name="Parkhill J."/>
            <person name="Dougan G."/>
            <person name="James K.D."/>
            <person name="Thomson N.R."/>
            <person name="Pickard D."/>
            <person name="Wain J."/>
            <person name="Churcher C.M."/>
            <person name="Mungall K.L."/>
            <person name="Bentley S.D."/>
            <person name="Holden M.T.G."/>
            <person name="Sebaihia M."/>
            <person name="Baker S."/>
            <person name="Basham D."/>
            <person name="Brooks K."/>
            <person name="Chillingworth T."/>
            <person name="Connerton P."/>
            <person name="Cronin A."/>
            <person name="Davis P."/>
            <person name="Davies R.M."/>
            <person name="Dowd L."/>
            <person name="White N."/>
            <person name="Farrar J."/>
            <person name="Feltwell T."/>
            <person name="Hamlin N."/>
            <person name="Haque A."/>
            <person name="Hien T.T."/>
            <person name="Holroyd S."/>
            <person name="Jagels K."/>
            <person name="Krogh A."/>
            <person name="Larsen T.S."/>
            <person name="Leather S."/>
            <person name="Moule S."/>
            <person name="O'Gaora P."/>
            <person name="Parry C."/>
            <person name="Quail M.A."/>
            <person name="Rutherford K.M."/>
            <person name="Simmonds M."/>
            <person name="Skelton J."/>
            <person name="Stevens K."/>
            <person name="Whitehead S."/>
            <person name="Barrell B.G."/>
        </authorList>
    </citation>
    <scope>NUCLEOTIDE SEQUENCE [LARGE SCALE GENOMIC DNA]</scope>
    <source>
        <strain>CT18</strain>
    </source>
</reference>
<reference key="2">
    <citation type="journal article" date="2003" name="J. Bacteriol.">
        <title>Comparative genomics of Salmonella enterica serovar Typhi strains Ty2 and CT18.</title>
        <authorList>
            <person name="Deng W."/>
            <person name="Liou S.-R."/>
            <person name="Plunkett G. III"/>
            <person name="Mayhew G.F."/>
            <person name="Rose D.J."/>
            <person name="Burland V."/>
            <person name="Kodoyianni V."/>
            <person name="Schwartz D.C."/>
            <person name="Blattner F.R."/>
        </authorList>
    </citation>
    <scope>NUCLEOTIDE SEQUENCE [LARGE SCALE GENOMIC DNA]</scope>
    <source>
        <strain>ATCC 700931 / Ty2</strain>
    </source>
</reference>
<gene>
    <name type="primary">ptrA</name>
    <name type="synonym">ptr</name>
    <name type="ordered locus">STY3133</name>
    <name type="ordered locus">t2903</name>
</gene>
<sequence>MPRSTWFKALLLLVALWGPAVQADIGWQPLQETIRKSDKDTRQYQAIRLDNDMVVLLVSDPQAVKSLSALVVPVVSLEDPEAHQGLAHYLEHMCLMGSKKYPQADSLAEYLKRHGGSHNASTAPYRTAFYLEVENDALPGAVDRLADAIAAPLLNKKYAERERNAVNAELTMARTRDGMRMAQVSAETINPAHPGSHFSGGNLETLSDKPGNPVQQALIAFHEKYYSSNLMKAVIYSNKPLPELASIAAATYGRVPNKQIKKPEITVPVITEAQKGIIIHYVPALPRKVLRVEFRIDNNSAQFRSKTDELVSYLIGNRSPGTLSDWLQKQGLVEGISADSDPIVNGNSGVFAISATLTDKGLANRDEVVAAIFSYLNTLREKGIDKRYFDELAHVLDLDFRYPSITRDMDYVEWLADTMIRVPVAHTLDAANIADRYDPAAIKNRLAMMTPQNARIWYISPQEPHNKIAYFVDAPYQVDKISEQTFKNWQQKAQGIALSLPELNPYIPDDFTLIKNDKNYVRPELIVDKADLRVVYAPSRYFASEPKADVSVVLRNPQAMDSARNQVLFALNDYLAGMALDQLSNQAAVGGISFSTNANNGLMVTANGYTQRLPQLFLALLEGYFSYDATEEQLAQAKSWYTQMMDSAEKGKAYEQAIMPVQMISQVPYFSRDERRALLPSITLKEVMAYRNALKTGARPEFLVIGNMSEAQATSLAQDVQKQLAANGSAWCRNKDVVVEKKQSVIFEKAGSSTDSALAAVFVPVGYDEYVSAAYSAMLGQIVQPWFYNQLRTEEQLGYAVFAFPMSVGRQWGMGFLLQSNDKQPSYLWQRYQAFFPDAEAKLRAMKPEEFAQIQQAIITQMRQAPQTLGEEASRLSKDFDRGNMRFDSRDKIIAQIKLLTPQKLADFFHQAVVEPQGMAILSQIAGSQNGKAEYVHPTGWKVWDNVSALQQTLPLMSEKNE</sequence>
<keyword id="KW-0378">Hydrolase</keyword>
<keyword id="KW-0460">Magnesium</keyword>
<keyword id="KW-0479">Metal-binding</keyword>
<keyword id="KW-0482">Metalloprotease</keyword>
<keyword id="KW-0574">Periplasm</keyword>
<keyword id="KW-0645">Protease</keyword>
<keyword id="KW-0732">Signal</keyword>
<keyword id="KW-0862">Zinc</keyword>
<organism>
    <name type="scientific">Salmonella typhi</name>
    <dbReference type="NCBI Taxonomy" id="90370"/>
    <lineage>
        <taxon>Bacteria</taxon>
        <taxon>Pseudomonadati</taxon>
        <taxon>Pseudomonadota</taxon>
        <taxon>Gammaproteobacteria</taxon>
        <taxon>Enterobacterales</taxon>
        <taxon>Enterobacteriaceae</taxon>
        <taxon>Salmonella</taxon>
    </lineage>
</organism>
<proteinExistence type="inferred from homology"/>
<comment type="function">
    <text evidence="1">Endopeptidase that degrades small peptides of less than 7 kDa, such as glucagon and insulin.</text>
</comment>
<comment type="catalytic activity">
    <reaction>
        <text>Preferential cleavage of 16-Tyr-|-Leu-17 and 25-Phe-|-Tyr-26 bonds of oxidized insulin B chain. Also acts on other substrates of Mw less than 7 kDa such as insulin and glucagon.</text>
        <dbReference type="EC" id="3.4.24.55"/>
    </reaction>
</comment>
<comment type="cofactor">
    <cofactor evidence="1">
        <name>Zn(2+)</name>
        <dbReference type="ChEBI" id="CHEBI:29105"/>
    </cofactor>
    <text evidence="1">Binds 1 zinc ion per subunit.</text>
</comment>
<comment type="subunit">
    <text evidence="1">Monomer.</text>
</comment>
<comment type="subcellular location">
    <subcellularLocation>
        <location evidence="1">Periplasm</location>
    </subcellularLocation>
</comment>
<comment type="similarity">
    <text evidence="2">Belongs to the peptidase M16 family.</text>
</comment>
<protein>
    <recommendedName>
        <fullName>Protease 3</fullName>
        <ecNumber>3.4.24.55</ecNumber>
    </recommendedName>
    <alternativeName>
        <fullName>Pitrilysin</fullName>
    </alternativeName>
    <alternativeName>
        <fullName>Protease III</fullName>
    </alternativeName>
    <alternativeName>
        <fullName>Protease pi</fullName>
    </alternativeName>
</protein>
<name>PTRA_SALTI</name>